<evidence type="ECO:0000255" key="1">
    <source>
        <dbReference type="HAMAP-Rule" id="MF_01020"/>
    </source>
</evidence>
<evidence type="ECO:0000256" key="2">
    <source>
        <dbReference type="SAM" id="MobiDB-lite"/>
    </source>
</evidence>
<evidence type="ECO:0000305" key="3"/>
<organism>
    <name type="scientific">Rhodopirellula baltica (strain DSM 10527 / NCIMB 13988 / SH1)</name>
    <dbReference type="NCBI Taxonomy" id="243090"/>
    <lineage>
        <taxon>Bacteria</taxon>
        <taxon>Pseudomonadati</taxon>
        <taxon>Planctomycetota</taxon>
        <taxon>Planctomycetia</taxon>
        <taxon>Pirellulales</taxon>
        <taxon>Pirellulaceae</taxon>
        <taxon>Rhodopirellula</taxon>
    </lineage>
</organism>
<keyword id="KW-0028">Amino-acid biosynthesis</keyword>
<keyword id="KW-0067">ATP-binding</keyword>
<keyword id="KW-0963">Cytoplasm</keyword>
<keyword id="KW-0368">Histidine biosynthesis</keyword>
<keyword id="KW-0378">Hydrolase</keyword>
<keyword id="KW-0547">Nucleotide-binding</keyword>
<keyword id="KW-1185">Reference proteome</keyword>
<proteinExistence type="inferred from homology"/>
<name>HIS2_RHOBA</name>
<feature type="chain" id="PRO_0000136382" description="Phosphoribosyl-ATP pyrophosphatase">
    <location>
        <begin position="1"/>
        <end position="120"/>
    </location>
</feature>
<feature type="region of interest" description="Disordered" evidence="2">
    <location>
        <begin position="97"/>
        <end position="120"/>
    </location>
</feature>
<feature type="compositionally biased region" description="Basic and acidic residues" evidence="2">
    <location>
        <begin position="106"/>
        <end position="120"/>
    </location>
</feature>
<accession>Q7URL1</accession>
<sequence length="120" mass="13126">MPESLLPLDRLMTTLRTRAAERPEGSYTTKLMNGGAEAIGRKIREEAEELIEAADEPDEAGRQHAIYEAGDLIYHAMVLMAWRGIELDEVAAELARREGTSGLVEKASRPAKKDSGTADS</sequence>
<protein>
    <recommendedName>
        <fullName evidence="1">Phosphoribosyl-ATP pyrophosphatase</fullName>
        <shortName evidence="1">PRA-PH</shortName>
        <ecNumber evidence="1">3.6.1.31</ecNumber>
    </recommendedName>
</protein>
<gene>
    <name evidence="1" type="primary">hisE</name>
    <name type="synonym">hisI</name>
    <name type="ordered locus">RB5601</name>
</gene>
<reference key="1">
    <citation type="journal article" date="2003" name="Proc. Natl. Acad. Sci. U.S.A.">
        <title>Complete genome sequence of the marine planctomycete Pirellula sp. strain 1.</title>
        <authorList>
            <person name="Gloeckner F.O."/>
            <person name="Kube M."/>
            <person name="Bauer M."/>
            <person name="Teeling H."/>
            <person name="Lombardot T."/>
            <person name="Ludwig W."/>
            <person name="Gade D."/>
            <person name="Beck A."/>
            <person name="Borzym K."/>
            <person name="Heitmann K."/>
            <person name="Rabus R."/>
            <person name="Schlesner H."/>
            <person name="Amann R."/>
            <person name="Reinhardt R."/>
        </authorList>
    </citation>
    <scope>NUCLEOTIDE SEQUENCE [LARGE SCALE GENOMIC DNA]</scope>
    <source>
        <strain>DSM 10527 / NCIMB 13988 / SH1</strain>
    </source>
</reference>
<comment type="catalytic activity">
    <reaction evidence="1">
        <text>1-(5-phospho-beta-D-ribosyl)-ATP + H2O = 1-(5-phospho-beta-D-ribosyl)-5'-AMP + diphosphate + H(+)</text>
        <dbReference type="Rhea" id="RHEA:22828"/>
        <dbReference type="ChEBI" id="CHEBI:15377"/>
        <dbReference type="ChEBI" id="CHEBI:15378"/>
        <dbReference type="ChEBI" id="CHEBI:33019"/>
        <dbReference type="ChEBI" id="CHEBI:59457"/>
        <dbReference type="ChEBI" id="CHEBI:73183"/>
        <dbReference type="EC" id="3.6.1.31"/>
    </reaction>
</comment>
<comment type="pathway">
    <text evidence="1">Amino-acid biosynthesis; L-histidine biosynthesis; L-histidine from 5-phospho-alpha-D-ribose 1-diphosphate: step 2/9.</text>
</comment>
<comment type="subcellular location">
    <subcellularLocation>
        <location evidence="1">Cytoplasm</location>
    </subcellularLocation>
</comment>
<comment type="similarity">
    <text evidence="1">Belongs to the PRA-PH family.</text>
</comment>
<comment type="sequence caution" evidence="3">
    <conflict type="erroneous initiation">
        <sequence resource="EMBL-CDS" id="CAD74327"/>
    </conflict>
</comment>
<dbReference type="EC" id="3.6.1.31" evidence="1"/>
<dbReference type="EMBL" id="BX294142">
    <property type="protein sequence ID" value="CAD74327.1"/>
    <property type="status" value="ALT_INIT"/>
    <property type="molecule type" value="Genomic_DNA"/>
</dbReference>
<dbReference type="RefSeq" id="NP_866787.1">
    <property type="nucleotide sequence ID" value="NC_005027.1"/>
</dbReference>
<dbReference type="RefSeq" id="WP_276664210.1">
    <property type="nucleotide sequence ID" value="NC_005027.1"/>
</dbReference>
<dbReference type="SMR" id="Q7URL1"/>
<dbReference type="STRING" id="243090.RB5601"/>
<dbReference type="EnsemblBacteria" id="CAD74327">
    <property type="protein sequence ID" value="CAD74327"/>
    <property type="gene ID" value="RB5601"/>
</dbReference>
<dbReference type="KEGG" id="rba:RB5601"/>
<dbReference type="PATRIC" id="fig|243090.15.peg.2685"/>
<dbReference type="eggNOG" id="COG0140">
    <property type="taxonomic scope" value="Bacteria"/>
</dbReference>
<dbReference type="HOGENOM" id="CLU_1668013_0_0_0"/>
<dbReference type="InParanoid" id="Q7URL1"/>
<dbReference type="OrthoDB" id="9814738at2"/>
<dbReference type="UniPathway" id="UPA00031">
    <property type="reaction ID" value="UER00007"/>
</dbReference>
<dbReference type="Proteomes" id="UP000001025">
    <property type="component" value="Chromosome"/>
</dbReference>
<dbReference type="GO" id="GO:0005737">
    <property type="term" value="C:cytoplasm"/>
    <property type="evidence" value="ECO:0007669"/>
    <property type="project" value="UniProtKB-SubCell"/>
</dbReference>
<dbReference type="GO" id="GO:0005524">
    <property type="term" value="F:ATP binding"/>
    <property type="evidence" value="ECO:0007669"/>
    <property type="project" value="UniProtKB-KW"/>
</dbReference>
<dbReference type="GO" id="GO:0004636">
    <property type="term" value="F:phosphoribosyl-ATP diphosphatase activity"/>
    <property type="evidence" value="ECO:0007669"/>
    <property type="project" value="UniProtKB-UniRule"/>
</dbReference>
<dbReference type="GO" id="GO:0000105">
    <property type="term" value="P:L-histidine biosynthetic process"/>
    <property type="evidence" value="ECO:0007669"/>
    <property type="project" value="UniProtKB-UniRule"/>
</dbReference>
<dbReference type="CDD" id="cd11534">
    <property type="entry name" value="NTP-PPase_HisIE_like"/>
    <property type="match status" value="1"/>
</dbReference>
<dbReference type="Gene3D" id="1.10.287.1080">
    <property type="entry name" value="MazG-like"/>
    <property type="match status" value="1"/>
</dbReference>
<dbReference type="HAMAP" id="MF_01020">
    <property type="entry name" value="HisE"/>
    <property type="match status" value="1"/>
</dbReference>
<dbReference type="InterPro" id="IPR008179">
    <property type="entry name" value="HisE"/>
</dbReference>
<dbReference type="InterPro" id="IPR021130">
    <property type="entry name" value="PRib-ATP_PPHydrolase-like"/>
</dbReference>
<dbReference type="NCBIfam" id="TIGR03188">
    <property type="entry name" value="histidine_hisI"/>
    <property type="match status" value="1"/>
</dbReference>
<dbReference type="PANTHER" id="PTHR42945">
    <property type="entry name" value="HISTIDINE BIOSYNTHESIS BIFUNCTIONAL PROTEIN"/>
    <property type="match status" value="1"/>
</dbReference>
<dbReference type="PANTHER" id="PTHR42945:SF1">
    <property type="entry name" value="HISTIDINE BIOSYNTHESIS BIFUNCTIONAL PROTEIN HIS7"/>
    <property type="match status" value="1"/>
</dbReference>
<dbReference type="Pfam" id="PF01503">
    <property type="entry name" value="PRA-PH"/>
    <property type="match status" value="1"/>
</dbReference>
<dbReference type="SUPFAM" id="SSF101386">
    <property type="entry name" value="all-alpha NTP pyrophosphatases"/>
    <property type="match status" value="1"/>
</dbReference>